<reference key="1">
    <citation type="submission" date="2007-04" db="EMBL/GenBank/DDBJ databases">
        <title>Complete sequence of chromosome of Mycobacterium gilvum PYR-GCK.</title>
        <authorList>
            <consortium name="US DOE Joint Genome Institute"/>
            <person name="Copeland A."/>
            <person name="Lucas S."/>
            <person name="Lapidus A."/>
            <person name="Barry K."/>
            <person name="Detter J.C."/>
            <person name="Glavina del Rio T."/>
            <person name="Hammon N."/>
            <person name="Israni S."/>
            <person name="Dalin E."/>
            <person name="Tice H."/>
            <person name="Pitluck S."/>
            <person name="Chain P."/>
            <person name="Malfatti S."/>
            <person name="Shin M."/>
            <person name="Vergez L."/>
            <person name="Schmutz J."/>
            <person name="Larimer F."/>
            <person name="Land M."/>
            <person name="Hauser L."/>
            <person name="Kyrpides N."/>
            <person name="Mikhailova N."/>
            <person name="Miller C."/>
            <person name="Richardson P."/>
        </authorList>
    </citation>
    <scope>NUCLEOTIDE SEQUENCE [LARGE SCALE GENOMIC DNA]</scope>
    <source>
        <strain>PYR-GCK</strain>
    </source>
</reference>
<dbReference type="EC" id="2.8.4.3" evidence="1"/>
<dbReference type="EMBL" id="CP000656">
    <property type="protein sequence ID" value="ABP46438.1"/>
    <property type="molecule type" value="Genomic_DNA"/>
</dbReference>
<dbReference type="SMR" id="A4TCM9"/>
<dbReference type="STRING" id="350054.Mflv_3967"/>
<dbReference type="KEGG" id="mgi:Mflv_3967"/>
<dbReference type="eggNOG" id="COG0621">
    <property type="taxonomic scope" value="Bacteria"/>
</dbReference>
<dbReference type="HOGENOM" id="CLU_018697_2_2_11"/>
<dbReference type="OrthoDB" id="9805215at2"/>
<dbReference type="GO" id="GO:0005829">
    <property type="term" value="C:cytosol"/>
    <property type="evidence" value="ECO:0007669"/>
    <property type="project" value="TreeGrafter"/>
</dbReference>
<dbReference type="GO" id="GO:0051539">
    <property type="term" value="F:4 iron, 4 sulfur cluster binding"/>
    <property type="evidence" value="ECO:0007669"/>
    <property type="project" value="UniProtKB-UniRule"/>
</dbReference>
<dbReference type="GO" id="GO:0046872">
    <property type="term" value="F:metal ion binding"/>
    <property type="evidence" value="ECO:0007669"/>
    <property type="project" value="UniProtKB-KW"/>
</dbReference>
<dbReference type="GO" id="GO:0035597">
    <property type="term" value="F:N6-isopentenyladenosine methylthiotransferase activity"/>
    <property type="evidence" value="ECO:0007669"/>
    <property type="project" value="TreeGrafter"/>
</dbReference>
<dbReference type="CDD" id="cd01335">
    <property type="entry name" value="Radical_SAM"/>
    <property type="match status" value="1"/>
</dbReference>
<dbReference type="FunFam" id="3.40.50.12160:FF:000003">
    <property type="entry name" value="CDK5 regulatory subunit-associated protein 1"/>
    <property type="match status" value="1"/>
</dbReference>
<dbReference type="FunFam" id="3.80.30.20:FF:000001">
    <property type="entry name" value="tRNA-2-methylthio-N(6)-dimethylallyladenosine synthase 2"/>
    <property type="match status" value="1"/>
</dbReference>
<dbReference type="Gene3D" id="3.40.50.12160">
    <property type="entry name" value="Methylthiotransferase, N-terminal domain"/>
    <property type="match status" value="1"/>
</dbReference>
<dbReference type="Gene3D" id="3.80.30.20">
    <property type="entry name" value="tm_1862 like domain"/>
    <property type="match status" value="1"/>
</dbReference>
<dbReference type="HAMAP" id="MF_01864">
    <property type="entry name" value="tRNA_metthiotr_MiaB"/>
    <property type="match status" value="1"/>
</dbReference>
<dbReference type="InterPro" id="IPR006638">
    <property type="entry name" value="Elp3/MiaA/NifB-like_rSAM"/>
</dbReference>
<dbReference type="InterPro" id="IPR005839">
    <property type="entry name" value="Methylthiotransferase"/>
</dbReference>
<dbReference type="InterPro" id="IPR020612">
    <property type="entry name" value="Methylthiotransferase_CS"/>
</dbReference>
<dbReference type="InterPro" id="IPR013848">
    <property type="entry name" value="Methylthiotransferase_N"/>
</dbReference>
<dbReference type="InterPro" id="IPR038135">
    <property type="entry name" value="Methylthiotransferase_N_sf"/>
</dbReference>
<dbReference type="InterPro" id="IPR006463">
    <property type="entry name" value="MiaB_methiolase"/>
</dbReference>
<dbReference type="InterPro" id="IPR007197">
    <property type="entry name" value="rSAM"/>
</dbReference>
<dbReference type="InterPro" id="IPR023404">
    <property type="entry name" value="rSAM_horseshoe"/>
</dbReference>
<dbReference type="InterPro" id="IPR002792">
    <property type="entry name" value="TRAM_dom"/>
</dbReference>
<dbReference type="NCBIfam" id="TIGR01574">
    <property type="entry name" value="miaB-methiolase"/>
    <property type="match status" value="1"/>
</dbReference>
<dbReference type="NCBIfam" id="TIGR00089">
    <property type="entry name" value="MiaB/RimO family radical SAM methylthiotransferase"/>
    <property type="match status" value="1"/>
</dbReference>
<dbReference type="PANTHER" id="PTHR43020">
    <property type="entry name" value="CDK5 REGULATORY SUBUNIT-ASSOCIATED PROTEIN 1"/>
    <property type="match status" value="1"/>
</dbReference>
<dbReference type="PANTHER" id="PTHR43020:SF2">
    <property type="entry name" value="MITOCHONDRIAL TRNA METHYLTHIOTRANSFERASE CDK5RAP1"/>
    <property type="match status" value="1"/>
</dbReference>
<dbReference type="Pfam" id="PF04055">
    <property type="entry name" value="Radical_SAM"/>
    <property type="match status" value="1"/>
</dbReference>
<dbReference type="Pfam" id="PF00919">
    <property type="entry name" value="UPF0004"/>
    <property type="match status" value="1"/>
</dbReference>
<dbReference type="SFLD" id="SFLDF00273">
    <property type="entry name" value="(dimethylallyl)adenosine_tRNA"/>
    <property type="match status" value="1"/>
</dbReference>
<dbReference type="SFLD" id="SFLDG01082">
    <property type="entry name" value="B12-binding_domain_containing"/>
    <property type="match status" value="1"/>
</dbReference>
<dbReference type="SFLD" id="SFLDG01061">
    <property type="entry name" value="methylthiotransferase"/>
    <property type="match status" value="1"/>
</dbReference>
<dbReference type="SMART" id="SM00729">
    <property type="entry name" value="Elp3"/>
    <property type="match status" value="1"/>
</dbReference>
<dbReference type="SUPFAM" id="SSF102114">
    <property type="entry name" value="Radical SAM enzymes"/>
    <property type="match status" value="1"/>
</dbReference>
<dbReference type="PROSITE" id="PS51449">
    <property type="entry name" value="MTTASE_N"/>
    <property type="match status" value="1"/>
</dbReference>
<dbReference type="PROSITE" id="PS01278">
    <property type="entry name" value="MTTASE_RADICAL"/>
    <property type="match status" value="1"/>
</dbReference>
<dbReference type="PROSITE" id="PS51918">
    <property type="entry name" value="RADICAL_SAM"/>
    <property type="match status" value="1"/>
</dbReference>
<dbReference type="PROSITE" id="PS50926">
    <property type="entry name" value="TRAM"/>
    <property type="match status" value="1"/>
</dbReference>
<comment type="function">
    <text evidence="1">Catalyzes the methylthiolation of N6-(dimethylallyl)adenosine (i(6)A), leading to the formation of 2-methylthio-N6-(dimethylallyl)adenosine (ms(2)i(6)A) at position 37 in tRNAs that read codons beginning with uridine.</text>
</comment>
<comment type="catalytic activity">
    <reaction evidence="1">
        <text>N(6)-dimethylallyladenosine(37) in tRNA + (sulfur carrier)-SH + AH2 + 2 S-adenosyl-L-methionine = 2-methylsulfanyl-N(6)-dimethylallyladenosine(37) in tRNA + (sulfur carrier)-H + 5'-deoxyadenosine + L-methionine + A + S-adenosyl-L-homocysteine + 2 H(+)</text>
        <dbReference type="Rhea" id="RHEA:37067"/>
        <dbReference type="Rhea" id="RHEA-COMP:10375"/>
        <dbReference type="Rhea" id="RHEA-COMP:10376"/>
        <dbReference type="Rhea" id="RHEA-COMP:14737"/>
        <dbReference type="Rhea" id="RHEA-COMP:14739"/>
        <dbReference type="ChEBI" id="CHEBI:13193"/>
        <dbReference type="ChEBI" id="CHEBI:15378"/>
        <dbReference type="ChEBI" id="CHEBI:17319"/>
        <dbReference type="ChEBI" id="CHEBI:17499"/>
        <dbReference type="ChEBI" id="CHEBI:29917"/>
        <dbReference type="ChEBI" id="CHEBI:57844"/>
        <dbReference type="ChEBI" id="CHEBI:57856"/>
        <dbReference type="ChEBI" id="CHEBI:59789"/>
        <dbReference type="ChEBI" id="CHEBI:64428"/>
        <dbReference type="ChEBI" id="CHEBI:74415"/>
        <dbReference type="ChEBI" id="CHEBI:74417"/>
        <dbReference type="EC" id="2.8.4.3"/>
    </reaction>
</comment>
<comment type="cofactor">
    <cofactor evidence="1">
        <name>[4Fe-4S] cluster</name>
        <dbReference type="ChEBI" id="CHEBI:49883"/>
    </cofactor>
    <text evidence="1">Binds 2 [4Fe-4S] clusters. One cluster is coordinated with 3 cysteines and an exchangeable S-adenosyl-L-methionine.</text>
</comment>
<comment type="subunit">
    <text evidence="1">Monomer.</text>
</comment>
<comment type="subcellular location">
    <subcellularLocation>
        <location evidence="1">Cytoplasm</location>
    </subcellularLocation>
</comment>
<comment type="similarity">
    <text evidence="1">Belongs to the methylthiotransferase family. MiaB subfamily.</text>
</comment>
<keyword id="KW-0004">4Fe-4S</keyword>
<keyword id="KW-0963">Cytoplasm</keyword>
<keyword id="KW-0408">Iron</keyword>
<keyword id="KW-0411">Iron-sulfur</keyword>
<keyword id="KW-0479">Metal-binding</keyword>
<keyword id="KW-0949">S-adenosyl-L-methionine</keyword>
<keyword id="KW-0808">Transferase</keyword>
<keyword id="KW-0819">tRNA processing</keyword>
<organism>
    <name type="scientific">Mycolicibacterium gilvum (strain PYR-GCK)</name>
    <name type="common">Mycobacterium gilvum (strain PYR-GCK)</name>
    <dbReference type="NCBI Taxonomy" id="350054"/>
    <lineage>
        <taxon>Bacteria</taxon>
        <taxon>Bacillati</taxon>
        <taxon>Actinomycetota</taxon>
        <taxon>Actinomycetes</taxon>
        <taxon>Mycobacteriales</taxon>
        <taxon>Mycobacteriaceae</taxon>
        <taxon>Mycolicibacterium</taxon>
    </lineage>
</organism>
<evidence type="ECO:0000255" key="1">
    <source>
        <dbReference type="HAMAP-Rule" id="MF_01864"/>
    </source>
</evidence>
<evidence type="ECO:0000255" key="2">
    <source>
        <dbReference type="PROSITE-ProRule" id="PRU01266"/>
    </source>
</evidence>
<evidence type="ECO:0000256" key="3">
    <source>
        <dbReference type="SAM" id="MobiDB-lite"/>
    </source>
</evidence>
<protein>
    <recommendedName>
        <fullName evidence="1">tRNA-2-methylthio-N(6)-dimethylallyladenosine synthase</fullName>
        <ecNumber evidence="1">2.8.4.3</ecNumber>
    </recommendedName>
    <alternativeName>
        <fullName evidence="1">(Dimethylallyl)adenosine tRNA methylthiotransferase MiaB</fullName>
    </alternativeName>
    <alternativeName>
        <fullName evidence="1">tRNA-i(6)A37 methylthiotransferase</fullName>
    </alternativeName>
</protein>
<sequence length="512" mass="55296">MLQQADGVSPDRSSCDTPAPRTFEVRTYGCQMNVHDSERLSGLLEQAGYQRAGAGVDADIVVFNTCAVRENADNKLYGNLSHLAPRKQADPQMQIAVGGCLAQKDRDAVLRKAPWVDVVFGTHNIGSLPTLLDRARHNRVAQVEIAESLREFPSALPASRESAYAAWVSISVGCNNTCTFCIVPSLRGKEVDRRPGDVLAEVQALVDQGVLEITLLGQNVNAYGVSFADPTEARDRGAFAKLLRACGRIDGLERVRFTSPHPAEFTDDVIEAMAQTSNVCPTLHMPLQSGSDRILRAMRRSYRADRYLGIIDRVRTAIPHAAITTDLIVGFPGETEEDFQATLDVVEAARFSSAFTFQYSKRPGTPAAELEGQIPKAVVSERYQRLIELQERISWEENRAQIGREVELLVATGEGRKDAATARMSGRARDGRLVHFAPGALGADIRPGDIVVTTVTGAAPHHLIADAGPAEHRRTRAGDAHAEGRTPKTGVGLGMPGIGAPEPAPVTQGCAL</sequence>
<feature type="chain" id="PRO_0000374386" description="tRNA-2-methylthio-N(6)-dimethylallyladenosine synthase">
    <location>
        <begin position="1"/>
        <end position="512"/>
    </location>
</feature>
<feature type="domain" description="MTTase N-terminal" evidence="1">
    <location>
        <begin position="21"/>
        <end position="137"/>
    </location>
</feature>
<feature type="domain" description="Radical SAM core" evidence="2">
    <location>
        <begin position="160"/>
        <end position="397"/>
    </location>
</feature>
<feature type="domain" description="TRAM" evidence="1">
    <location>
        <begin position="399"/>
        <end position="469"/>
    </location>
</feature>
<feature type="region of interest" description="Disordered" evidence="3">
    <location>
        <begin position="1"/>
        <end position="20"/>
    </location>
</feature>
<feature type="region of interest" description="Disordered" evidence="3">
    <location>
        <begin position="470"/>
        <end position="512"/>
    </location>
</feature>
<feature type="compositionally biased region" description="Basic and acidic residues" evidence="3">
    <location>
        <begin position="470"/>
        <end position="486"/>
    </location>
</feature>
<feature type="binding site" evidence="1">
    <location>
        <position position="30"/>
    </location>
    <ligand>
        <name>[4Fe-4S] cluster</name>
        <dbReference type="ChEBI" id="CHEBI:49883"/>
        <label>1</label>
    </ligand>
</feature>
<feature type="binding site" evidence="1">
    <location>
        <position position="66"/>
    </location>
    <ligand>
        <name>[4Fe-4S] cluster</name>
        <dbReference type="ChEBI" id="CHEBI:49883"/>
        <label>1</label>
    </ligand>
</feature>
<feature type="binding site" evidence="1">
    <location>
        <position position="100"/>
    </location>
    <ligand>
        <name>[4Fe-4S] cluster</name>
        <dbReference type="ChEBI" id="CHEBI:49883"/>
        <label>1</label>
    </ligand>
</feature>
<feature type="binding site" evidence="1">
    <location>
        <position position="174"/>
    </location>
    <ligand>
        <name>[4Fe-4S] cluster</name>
        <dbReference type="ChEBI" id="CHEBI:49883"/>
        <label>2</label>
        <note>4Fe-4S-S-AdoMet</note>
    </ligand>
</feature>
<feature type="binding site" evidence="1">
    <location>
        <position position="178"/>
    </location>
    <ligand>
        <name>[4Fe-4S] cluster</name>
        <dbReference type="ChEBI" id="CHEBI:49883"/>
        <label>2</label>
        <note>4Fe-4S-S-AdoMet</note>
    </ligand>
</feature>
<feature type="binding site" evidence="1">
    <location>
        <position position="181"/>
    </location>
    <ligand>
        <name>[4Fe-4S] cluster</name>
        <dbReference type="ChEBI" id="CHEBI:49883"/>
        <label>2</label>
        <note>4Fe-4S-S-AdoMet</note>
    </ligand>
</feature>
<proteinExistence type="inferred from homology"/>
<gene>
    <name evidence="1" type="primary">miaB</name>
    <name type="ordered locus">Mflv_3967</name>
</gene>
<name>MIAB_MYCGI</name>
<accession>A4TCM9</accession>